<feature type="chain" id="PRO_0000236941" description="Phosphoenolpyruvate carboxykinase (ATP)">
    <location>
        <begin position="1"/>
        <end position="539"/>
    </location>
</feature>
<feature type="binding site" evidence="1">
    <location>
        <position position="64"/>
    </location>
    <ligand>
        <name>substrate</name>
    </ligand>
</feature>
<feature type="binding site" evidence="1">
    <location>
        <position position="206"/>
    </location>
    <ligand>
        <name>substrate</name>
    </ligand>
</feature>
<feature type="binding site" evidence="1">
    <location>
        <position position="212"/>
    </location>
    <ligand>
        <name>ATP</name>
        <dbReference type="ChEBI" id="CHEBI:30616"/>
    </ligand>
</feature>
<feature type="binding site" evidence="1">
    <location>
        <position position="212"/>
    </location>
    <ligand>
        <name>Mn(2+)</name>
        <dbReference type="ChEBI" id="CHEBI:29035"/>
    </ligand>
</feature>
<feature type="binding site" evidence="1">
    <location>
        <position position="212"/>
    </location>
    <ligand>
        <name>substrate</name>
    </ligand>
</feature>
<feature type="binding site" evidence="1">
    <location>
        <position position="231"/>
    </location>
    <ligand>
        <name>ATP</name>
        <dbReference type="ChEBI" id="CHEBI:30616"/>
    </ligand>
</feature>
<feature type="binding site" evidence="1">
    <location>
        <position position="231"/>
    </location>
    <ligand>
        <name>Mn(2+)</name>
        <dbReference type="ChEBI" id="CHEBI:29035"/>
    </ligand>
</feature>
<feature type="binding site" evidence="1">
    <location>
        <begin position="247"/>
        <end position="255"/>
    </location>
    <ligand>
        <name>ATP</name>
        <dbReference type="ChEBI" id="CHEBI:30616"/>
    </ligand>
</feature>
<feature type="binding site" evidence="1">
    <location>
        <position position="268"/>
    </location>
    <ligand>
        <name>Mn(2+)</name>
        <dbReference type="ChEBI" id="CHEBI:29035"/>
    </ligand>
</feature>
<feature type="binding site" evidence="1">
    <location>
        <position position="296"/>
    </location>
    <ligand>
        <name>ATP</name>
        <dbReference type="ChEBI" id="CHEBI:30616"/>
    </ligand>
</feature>
<feature type="binding site" evidence="1">
    <location>
        <position position="332"/>
    </location>
    <ligand>
        <name>ATP</name>
        <dbReference type="ChEBI" id="CHEBI:30616"/>
    </ligand>
</feature>
<feature type="binding site" evidence="1">
    <location>
        <position position="332"/>
    </location>
    <ligand>
        <name>substrate</name>
    </ligand>
</feature>
<feature type="binding site" evidence="1">
    <location>
        <begin position="448"/>
        <end position="449"/>
    </location>
    <ligand>
        <name>ATP</name>
        <dbReference type="ChEBI" id="CHEBI:30616"/>
    </ligand>
</feature>
<feature type="binding site" evidence="1">
    <location>
        <position position="454"/>
    </location>
    <ligand>
        <name>ATP</name>
        <dbReference type="ChEBI" id="CHEBI:30616"/>
    </ligand>
</feature>
<accession>Q5PLX8</accession>
<evidence type="ECO:0000255" key="1">
    <source>
        <dbReference type="HAMAP-Rule" id="MF_00453"/>
    </source>
</evidence>
<organism>
    <name type="scientific">Salmonella paratyphi A (strain ATCC 9150 / SARB42)</name>
    <dbReference type="NCBI Taxonomy" id="295319"/>
    <lineage>
        <taxon>Bacteria</taxon>
        <taxon>Pseudomonadati</taxon>
        <taxon>Pseudomonadota</taxon>
        <taxon>Gammaproteobacteria</taxon>
        <taxon>Enterobacterales</taxon>
        <taxon>Enterobacteriaceae</taxon>
        <taxon>Salmonella</taxon>
    </lineage>
</organism>
<keyword id="KW-0067">ATP-binding</keyword>
<keyword id="KW-0963">Cytoplasm</keyword>
<keyword id="KW-0210">Decarboxylase</keyword>
<keyword id="KW-0312">Gluconeogenesis</keyword>
<keyword id="KW-0456">Lyase</keyword>
<keyword id="KW-0464">Manganese</keyword>
<keyword id="KW-0479">Metal-binding</keyword>
<keyword id="KW-0547">Nucleotide-binding</keyword>
<dbReference type="EC" id="4.1.1.49" evidence="1"/>
<dbReference type="EMBL" id="CP000026">
    <property type="protein sequence ID" value="AAV79178.1"/>
    <property type="molecule type" value="Genomic_DNA"/>
</dbReference>
<dbReference type="RefSeq" id="WP_001265689.1">
    <property type="nucleotide sequence ID" value="NC_006511.1"/>
</dbReference>
<dbReference type="SMR" id="Q5PLX8"/>
<dbReference type="KEGG" id="spt:SPA3365"/>
<dbReference type="HOGENOM" id="CLU_018247_0_1_6"/>
<dbReference type="UniPathway" id="UPA00138"/>
<dbReference type="Proteomes" id="UP000008185">
    <property type="component" value="Chromosome"/>
</dbReference>
<dbReference type="GO" id="GO:0005829">
    <property type="term" value="C:cytosol"/>
    <property type="evidence" value="ECO:0007669"/>
    <property type="project" value="TreeGrafter"/>
</dbReference>
<dbReference type="GO" id="GO:0005524">
    <property type="term" value="F:ATP binding"/>
    <property type="evidence" value="ECO:0007669"/>
    <property type="project" value="UniProtKB-UniRule"/>
</dbReference>
<dbReference type="GO" id="GO:0046872">
    <property type="term" value="F:metal ion binding"/>
    <property type="evidence" value="ECO:0007669"/>
    <property type="project" value="UniProtKB-KW"/>
</dbReference>
<dbReference type="GO" id="GO:0004612">
    <property type="term" value="F:phosphoenolpyruvate carboxykinase (ATP) activity"/>
    <property type="evidence" value="ECO:0007669"/>
    <property type="project" value="UniProtKB-UniRule"/>
</dbReference>
<dbReference type="GO" id="GO:0006094">
    <property type="term" value="P:gluconeogenesis"/>
    <property type="evidence" value="ECO:0007669"/>
    <property type="project" value="UniProtKB-UniRule"/>
</dbReference>
<dbReference type="CDD" id="cd00484">
    <property type="entry name" value="PEPCK_ATP"/>
    <property type="match status" value="1"/>
</dbReference>
<dbReference type="FunFam" id="2.170.8.10:FF:000001">
    <property type="entry name" value="Phosphoenolpyruvate carboxykinase (ATP)"/>
    <property type="match status" value="1"/>
</dbReference>
<dbReference type="FunFam" id="3.40.449.10:FF:000001">
    <property type="entry name" value="Phosphoenolpyruvate carboxykinase (ATP)"/>
    <property type="match status" value="1"/>
</dbReference>
<dbReference type="Gene3D" id="3.90.228.20">
    <property type="match status" value="1"/>
</dbReference>
<dbReference type="Gene3D" id="3.40.449.10">
    <property type="entry name" value="Phosphoenolpyruvate Carboxykinase, domain 1"/>
    <property type="match status" value="1"/>
</dbReference>
<dbReference type="Gene3D" id="2.170.8.10">
    <property type="entry name" value="Phosphoenolpyruvate Carboxykinase, domain 2"/>
    <property type="match status" value="1"/>
</dbReference>
<dbReference type="HAMAP" id="MF_00453">
    <property type="entry name" value="PEPCK_ATP"/>
    <property type="match status" value="1"/>
</dbReference>
<dbReference type="InterPro" id="IPR001272">
    <property type="entry name" value="PEP_carboxykinase_ATP"/>
</dbReference>
<dbReference type="InterPro" id="IPR013035">
    <property type="entry name" value="PEP_carboxykinase_C"/>
</dbReference>
<dbReference type="InterPro" id="IPR008210">
    <property type="entry name" value="PEP_carboxykinase_N"/>
</dbReference>
<dbReference type="InterPro" id="IPR015994">
    <property type="entry name" value="PEPCK_ATP_CS"/>
</dbReference>
<dbReference type="NCBIfam" id="TIGR00224">
    <property type="entry name" value="pckA"/>
    <property type="match status" value="1"/>
</dbReference>
<dbReference type="NCBIfam" id="NF006819">
    <property type="entry name" value="PRK09344.1-1"/>
    <property type="match status" value="1"/>
</dbReference>
<dbReference type="NCBIfam" id="NF006820">
    <property type="entry name" value="PRK09344.1-2"/>
    <property type="match status" value="1"/>
</dbReference>
<dbReference type="NCBIfam" id="NF006821">
    <property type="entry name" value="PRK09344.1-3"/>
    <property type="match status" value="1"/>
</dbReference>
<dbReference type="PANTHER" id="PTHR30031:SF0">
    <property type="entry name" value="PHOSPHOENOLPYRUVATE CARBOXYKINASE (ATP)"/>
    <property type="match status" value="1"/>
</dbReference>
<dbReference type="PANTHER" id="PTHR30031">
    <property type="entry name" value="PHOSPHOENOLPYRUVATE CARBOXYKINASE ATP"/>
    <property type="match status" value="1"/>
</dbReference>
<dbReference type="Pfam" id="PF01293">
    <property type="entry name" value="PEPCK_ATP"/>
    <property type="match status" value="1"/>
</dbReference>
<dbReference type="PIRSF" id="PIRSF006294">
    <property type="entry name" value="PEP_crbxkin"/>
    <property type="match status" value="1"/>
</dbReference>
<dbReference type="SUPFAM" id="SSF68923">
    <property type="entry name" value="PEP carboxykinase N-terminal domain"/>
    <property type="match status" value="1"/>
</dbReference>
<dbReference type="SUPFAM" id="SSF53795">
    <property type="entry name" value="PEP carboxykinase-like"/>
    <property type="match status" value="1"/>
</dbReference>
<dbReference type="PROSITE" id="PS00532">
    <property type="entry name" value="PEPCK_ATP"/>
    <property type="match status" value="1"/>
</dbReference>
<gene>
    <name evidence="1" type="primary">pckA</name>
    <name type="ordered locus">SPA3365</name>
</gene>
<protein>
    <recommendedName>
        <fullName evidence="1">Phosphoenolpyruvate carboxykinase (ATP)</fullName>
        <shortName evidence="1">PCK</shortName>
        <shortName evidence="1">PEP carboxykinase</shortName>
        <shortName evidence="1">PEPCK</shortName>
        <ecNumber evidence="1">4.1.1.49</ecNumber>
    </recommendedName>
</protein>
<sequence>MRVNNLTPQDLKAYGINDVQDIVYNPSYDTLYQEELNPGLEGYERGVLTNLGAVAVDTGIFTGRSPKDKYIVRDDTTRDTLWWSDKGKGKNDNKPLSQETWQHLKGLVTHQLSGKRLFIVDAFCGANADTRLSVRFITEVAWQAHFVKNMFIRPTDEELVGFKPDFIVMNGAKCTNPQWKEQGLNSENFVAFNLTERIQLIGGTWYGGEMKKGMFSVMNYLLPLKGIASMHCSANVGEKGDVAVFFGLSGTGKTTLSTDPKRRLIGDDEHGWDDDGVFNFEGGCYAKTIKLSKEAEPEIYHAIRRDALLENVTVREDGTVDFDDGSKTENTRVSYPIYHIDNIVKPVSKAGHATKVIFLTADAFGVLPPVSRLTANQTQYHFLSGFTAKLAGTERGVTEPTPTFSACFGAAFLTLHPTQYAEVLVKRMQAAGAQAYLVNTGWNGTGKRISIKDTRAIIDAILNGSLDNAETFRLPLFDLAIPTELPGVDTHILDPRNTYASPEQWQEKATALAKLFIENFEKYTDTPAGEALVSAGPKL</sequence>
<name>PCKA_SALPA</name>
<comment type="function">
    <text evidence="1">Involved in the gluconeogenesis. Catalyzes the conversion of oxaloacetate (OAA) to phosphoenolpyruvate (PEP) through direct phosphoryl transfer between the nucleoside triphosphate and OAA.</text>
</comment>
<comment type="catalytic activity">
    <reaction evidence="1">
        <text>oxaloacetate + ATP = phosphoenolpyruvate + ADP + CO2</text>
        <dbReference type="Rhea" id="RHEA:18617"/>
        <dbReference type="ChEBI" id="CHEBI:16452"/>
        <dbReference type="ChEBI" id="CHEBI:16526"/>
        <dbReference type="ChEBI" id="CHEBI:30616"/>
        <dbReference type="ChEBI" id="CHEBI:58702"/>
        <dbReference type="ChEBI" id="CHEBI:456216"/>
        <dbReference type="EC" id="4.1.1.49"/>
    </reaction>
</comment>
<comment type="cofactor">
    <cofactor evidence="1">
        <name>Mn(2+)</name>
        <dbReference type="ChEBI" id="CHEBI:29035"/>
    </cofactor>
    <text evidence="1">Binds 1 Mn(2+) ion per subunit.</text>
</comment>
<comment type="pathway">
    <text evidence="1">Carbohydrate biosynthesis; gluconeogenesis.</text>
</comment>
<comment type="subunit">
    <text evidence="1">Monomer.</text>
</comment>
<comment type="subcellular location">
    <subcellularLocation>
        <location evidence="1">Cytoplasm</location>
    </subcellularLocation>
</comment>
<comment type="similarity">
    <text evidence="1">Belongs to the phosphoenolpyruvate carboxykinase (ATP) family.</text>
</comment>
<proteinExistence type="inferred from homology"/>
<reference key="1">
    <citation type="journal article" date="2004" name="Nat. Genet.">
        <title>Comparison of genome degradation in Paratyphi A and Typhi, human-restricted serovars of Salmonella enterica that cause typhoid.</title>
        <authorList>
            <person name="McClelland M."/>
            <person name="Sanderson K.E."/>
            <person name="Clifton S.W."/>
            <person name="Latreille P."/>
            <person name="Porwollik S."/>
            <person name="Sabo A."/>
            <person name="Meyer R."/>
            <person name="Bieri T."/>
            <person name="Ozersky P."/>
            <person name="McLellan M."/>
            <person name="Harkins C.R."/>
            <person name="Wang C."/>
            <person name="Nguyen C."/>
            <person name="Berghoff A."/>
            <person name="Elliott G."/>
            <person name="Kohlberg S."/>
            <person name="Strong C."/>
            <person name="Du F."/>
            <person name="Carter J."/>
            <person name="Kremizki C."/>
            <person name="Layman D."/>
            <person name="Leonard S."/>
            <person name="Sun H."/>
            <person name="Fulton L."/>
            <person name="Nash W."/>
            <person name="Miner T."/>
            <person name="Minx P."/>
            <person name="Delehaunty K."/>
            <person name="Fronick C."/>
            <person name="Magrini V."/>
            <person name="Nhan M."/>
            <person name="Warren W."/>
            <person name="Florea L."/>
            <person name="Spieth J."/>
            <person name="Wilson R.K."/>
        </authorList>
    </citation>
    <scope>NUCLEOTIDE SEQUENCE [LARGE SCALE GENOMIC DNA]</scope>
    <source>
        <strain>ATCC 9150 / SARB42</strain>
    </source>
</reference>